<evidence type="ECO:0000255" key="1">
    <source>
        <dbReference type="HAMAP-Rule" id="MF_00033"/>
    </source>
</evidence>
<organism>
    <name type="scientific">Bacillus cereus (strain ATCC 14579 / DSM 31 / CCUG 7414 / JCM 2152 / NBRC 15305 / NCIMB 9373 / NCTC 2599 / NRRL B-3711)</name>
    <dbReference type="NCBI Taxonomy" id="226900"/>
    <lineage>
        <taxon>Bacteria</taxon>
        <taxon>Bacillati</taxon>
        <taxon>Bacillota</taxon>
        <taxon>Bacilli</taxon>
        <taxon>Bacillales</taxon>
        <taxon>Bacillaceae</taxon>
        <taxon>Bacillus</taxon>
        <taxon>Bacillus cereus group</taxon>
    </lineage>
</organism>
<reference key="1">
    <citation type="journal article" date="2003" name="Nature">
        <title>Genome sequence of Bacillus cereus and comparative analysis with Bacillus anthracis.</title>
        <authorList>
            <person name="Ivanova N."/>
            <person name="Sorokin A."/>
            <person name="Anderson I."/>
            <person name="Galleron N."/>
            <person name="Candelon B."/>
            <person name="Kapatral V."/>
            <person name="Bhattacharyya A."/>
            <person name="Reznik G."/>
            <person name="Mikhailova N."/>
            <person name="Lapidus A."/>
            <person name="Chu L."/>
            <person name="Mazur M."/>
            <person name="Goltsman E."/>
            <person name="Larsen N."/>
            <person name="D'Souza M."/>
            <person name="Walunas T."/>
            <person name="Grechkin Y."/>
            <person name="Pusch G."/>
            <person name="Haselkorn R."/>
            <person name="Fonstein M."/>
            <person name="Ehrlich S.D."/>
            <person name="Overbeek R."/>
            <person name="Kyrpides N.C."/>
        </authorList>
    </citation>
    <scope>NUCLEOTIDE SEQUENCE [LARGE SCALE GENOMIC DNA]</scope>
    <source>
        <strain>ATCC 14579 / DSM 31 / CCUG 7414 / JCM 2152 / NBRC 15305 / NCIMB 9373 / NCTC 2599 / NRRL B-3711</strain>
    </source>
</reference>
<gene>
    <name evidence="1" type="primary">murG3</name>
    <name type="ordered locus">BC_3748</name>
</gene>
<sequence length="354" mass="39757">MSKTILFTGGGTAGHVMINIVLIPKFIEKGWRVEYIGSKNGIEKSLVQNVKYNSVSTGKLRRYWDWDNFKDPFKIIRGCLQSYNLIKKTKPDVIFSAGGFVSVPVAIGAWLNRVPIIIREPDSTLGLANKIALPFATKLCTTFPQTGENVSNEKKVYVGPIVRVEIEKGNVLRGRRYCEFQQDKPVLLIMGGSQGAKWINDMVRECLDTILLNFNIIHICGKGKVDPSIGMEGYMQFEYIGDELPHILNMASVVVSRAGSTAISELLFLKKPMLLIPLTNSSSRGDQVLNAEYFSRQGYAEVILQDRVSTNTFIHAVNKLYTNKEKYIQNMNGYKKTNDEGIHQIIDIINEVVK</sequence>
<proteinExistence type="inferred from homology"/>
<accession>Q812Y1</accession>
<protein>
    <recommendedName>
        <fullName evidence="1">UDP-N-acetylglucosamine--N-acetylmuramyl-(pentapeptide) pyrophosphoryl-undecaprenol N-acetylglucosamine transferase 3</fullName>
        <ecNumber evidence="1">2.4.1.227</ecNumber>
    </recommendedName>
    <alternativeName>
        <fullName evidence="1">Undecaprenyl-PP-MurNAc-pentapeptide-UDPGlcNAc GlcNAc transferase 3</fullName>
    </alternativeName>
</protein>
<name>MURG3_BACCR</name>
<comment type="function">
    <text evidence="1">Cell wall formation. Catalyzes the transfer of a GlcNAc subunit on undecaprenyl-pyrophosphoryl-MurNAc-pentapeptide (lipid intermediate I) to form undecaprenyl-pyrophosphoryl-MurNAc-(pentapeptide)GlcNAc (lipid intermediate II).</text>
</comment>
<comment type="catalytic activity">
    <reaction evidence="1">
        <text>di-trans,octa-cis-undecaprenyl diphospho-N-acetyl-alpha-D-muramoyl-L-alanyl-D-glutamyl-meso-2,6-diaminopimeloyl-D-alanyl-D-alanine + UDP-N-acetyl-alpha-D-glucosamine = di-trans,octa-cis-undecaprenyl diphospho-[N-acetyl-alpha-D-glucosaminyl-(1-&gt;4)]-N-acetyl-alpha-D-muramoyl-L-alanyl-D-glutamyl-meso-2,6-diaminopimeloyl-D-alanyl-D-alanine + UDP + H(+)</text>
        <dbReference type="Rhea" id="RHEA:31227"/>
        <dbReference type="ChEBI" id="CHEBI:15378"/>
        <dbReference type="ChEBI" id="CHEBI:57705"/>
        <dbReference type="ChEBI" id="CHEBI:58223"/>
        <dbReference type="ChEBI" id="CHEBI:61387"/>
        <dbReference type="ChEBI" id="CHEBI:61388"/>
        <dbReference type="EC" id="2.4.1.227"/>
    </reaction>
</comment>
<comment type="pathway">
    <text evidence="1">Cell wall biogenesis; peptidoglycan biosynthesis.</text>
</comment>
<comment type="subcellular location">
    <subcellularLocation>
        <location evidence="1">Cell membrane</location>
        <topology evidence="1">Peripheral membrane protein</topology>
        <orientation evidence="1">Cytoplasmic side</orientation>
    </subcellularLocation>
</comment>
<comment type="similarity">
    <text evidence="1">Belongs to the glycosyltransferase 28 family. MurG subfamily.</text>
</comment>
<feature type="chain" id="PRO_0000225023" description="UDP-N-acetylglucosamine--N-acetylmuramyl-(pentapeptide) pyrophosphoryl-undecaprenol N-acetylglucosamine transferase 3">
    <location>
        <begin position="1"/>
        <end position="354"/>
    </location>
</feature>
<feature type="binding site" evidence="1">
    <location>
        <begin position="12"/>
        <end position="14"/>
    </location>
    <ligand>
        <name>UDP-N-acetyl-alpha-D-glucosamine</name>
        <dbReference type="ChEBI" id="CHEBI:57705"/>
    </ligand>
</feature>
<feature type="binding site" evidence="1">
    <location>
        <position position="163"/>
    </location>
    <ligand>
        <name>UDP-N-acetyl-alpha-D-glucosamine</name>
        <dbReference type="ChEBI" id="CHEBI:57705"/>
    </ligand>
</feature>
<feature type="binding site" evidence="1">
    <location>
        <position position="193"/>
    </location>
    <ligand>
        <name>UDP-N-acetyl-alpha-D-glucosamine</name>
        <dbReference type="ChEBI" id="CHEBI:57705"/>
    </ligand>
</feature>
<feature type="binding site" evidence="1">
    <location>
        <position position="287"/>
    </location>
    <ligand>
        <name>UDP-N-acetyl-alpha-D-glucosamine</name>
        <dbReference type="ChEBI" id="CHEBI:57705"/>
    </ligand>
</feature>
<dbReference type="EC" id="2.4.1.227" evidence="1"/>
<dbReference type="EMBL" id="AE016877">
    <property type="protein sequence ID" value="AAP10674.1"/>
    <property type="molecule type" value="Genomic_DNA"/>
</dbReference>
<dbReference type="RefSeq" id="NP_833473.1">
    <property type="nucleotide sequence ID" value="NC_004722.1"/>
</dbReference>
<dbReference type="RefSeq" id="WP_000047551.1">
    <property type="nucleotide sequence ID" value="NZ_CP138336.1"/>
</dbReference>
<dbReference type="SMR" id="Q812Y1"/>
<dbReference type="STRING" id="226900.BC_3748"/>
<dbReference type="CAZy" id="GT28">
    <property type="family name" value="Glycosyltransferase Family 28"/>
</dbReference>
<dbReference type="KEGG" id="bce:BC3748"/>
<dbReference type="PATRIC" id="fig|226900.8.peg.3862"/>
<dbReference type="HOGENOM" id="CLU_037404_0_0_9"/>
<dbReference type="OrthoDB" id="9808936at2"/>
<dbReference type="UniPathway" id="UPA00219"/>
<dbReference type="Proteomes" id="UP000001417">
    <property type="component" value="Chromosome"/>
</dbReference>
<dbReference type="GO" id="GO:0005886">
    <property type="term" value="C:plasma membrane"/>
    <property type="evidence" value="ECO:0007669"/>
    <property type="project" value="UniProtKB-SubCell"/>
</dbReference>
<dbReference type="GO" id="GO:0016757">
    <property type="term" value="F:glycosyltransferase activity"/>
    <property type="evidence" value="ECO:0000318"/>
    <property type="project" value="GO_Central"/>
</dbReference>
<dbReference type="GO" id="GO:0051991">
    <property type="term" value="F:UDP-N-acetyl-D-glucosamine:N-acetylmuramoyl-L-alanyl-D-glutamyl-meso-2,6-diaminopimelyl-D-alanyl-D-alanine-diphosphoundecaprenol 4-beta-N-acetylglucosaminlytransferase activity"/>
    <property type="evidence" value="ECO:0007669"/>
    <property type="project" value="RHEA"/>
</dbReference>
<dbReference type="GO" id="GO:0050511">
    <property type="term" value="F:undecaprenyldiphospho-muramoylpentapeptide beta-N-acetylglucosaminyltransferase activity"/>
    <property type="evidence" value="ECO:0007669"/>
    <property type="project" value="UniProtKB-UniRule"/>
</dbReference>
<dbReference type="GO" id="GO:0005975">
    <property type="term" value="P:carbohydrate metabolic process"/>
    <property type="evidence" value="ECO:0007669"/>
    <property type="project" value="InterPro"/>
</dbReference>
<dbReference type="GO" id="GO:0051301">
    <property type="term" value="P:cell division"/>
    <property type="evidence" value="ECO:0007669"/>
    <property type="project" value="UniProtKB-KW"/>
</dbReference>
<dbReference type="GO" id="GO:0071555">
    <property type="term" value="P:cell wall organization"/>
    <property type="evidence" value="ECO:0007669"/>
    <property type="project" value="UniProtKB-KW"/>
</dbReference>
<dbReference type="GO" id="GO:0030259">
    <property type="term" value="P:lipid glycosylation"/>
    <property type="evidence" value="ECO:0007669"/>
    <property type="project" value="UniProtKB-UniRule"/>
</dbReference>
<dbReference type="GO" id="GO:0009252">
    <property type="term" value="P:peptidoglycan biosynthetic process"/>
    <property type="evidence" value="ECO:0007669"/>
    <property type="project" value="UniProtKB-UniRule"/>
</dbReference>
<dbReference type="GO" id="GO:0008360">
    <property type="term" value="P:regulation of cell shape"/>
    <property type="evidence" value="ECO:0007669"/>
    <property type="project" value="UniProtKB-KW"/>
</dbReference>
<dbReference type="CDD" id="cd03785">
    <property type="entry name" value="GT28_MurG"/>
    <property type="match status" value="1"/>
</dbReference>
<dbReference type="Gene3D" id="3.40.50.2000">
    <property type="entry name" value="Glycogen Phosphorylase B"/>
    <property type="match status" value="2"/>
</dbReference>
<dbReference type="HAMAP" id="MF_00033">
    <property type="entry name" value="MurG"/>
    <property type="match status" value="1"/>
</dbReference>
<dbReference type="InterPro" id="IPR006009">
    <property type="entry name" value="GlcNAc_MurG"/>
</dbReference>
<dbReference type="InterPro" id="IPR007235">
    <property type="entry name" value="Glyco_trans_28_C"/>
</dbReference>
<dbReference type="InterPro" id="IPR004276">
    <property type="entry name" value="GlycoTrans_28_N"/>
</dbReference>
<dbReference type="NCBIfam" id="NF009102">
    <property type="entry name" value="PRK12446.1"/>
    <property type="match status" value="1"/>
</dbReference>
<dbReference type="PANTHER" id="PTHR21015:SF27">
    <property type="entry name" value="UDP-N-ACETYLGLUCOSAMINE--N-ACETYLMURAMYL-(PENTAPEPTIDE) PYROPHOSPHORYL-UNDECAPRENOL N-ACETYLGLUCOSAMINE TRANSFERASE"/>
    <property type="match status" value="1"/>
</dbReference>
<dbReference type="PANTHER" id="PTHR21015">
    <property type="entry name" value="UDP-N-ACETYLGLUCOSAMINE--N-ACETYLMURAMYL-(PENTAPEPTIDE) PYROPHOSPHORYL-UNDECAPRENOL N-ACETYLGLUCOSAMINE TRANSFERASE 1"/>
    <property type="match status" value="1"/>
</dbReference>
<dbReference type="Pfam" id="PF04101">
    <property type="entry name" value="Glyco_tran_28_C"/>
    <property type="match status" value="1"/>
</dbReference>
<dbReference type="Pfam" id="PF03033">
    <property type="entry name" value="Glyco_transf_28"/>
    <property type="match status" value="1"/>
</dbReference>
<dbReference type="SUPFAM" id="SSF53756">
    <property type="entry name" value="UDP-Glycosyltransferase/glycogen phosphorylase"/>
    <property type="match status" value="1"/>
</dbReference>
<keyword id="KW-0131">Cell cycle</keyword>
<keyword id="KW-0132">Cell division</keyword>
<keyword id="KW-1003">Cell membrane</keyword>
<keyword id="KW-0133">Cell shape</keyword>
<keyword id="KW-0961">Cell wall biogenesis/degradation</keyword>
<keyword id="KW-0328">Glycosyltransferase</keyword>
<keyword id="KW-0472">Membrane</keyword>
<keyword id="KW-0573">Peptidoglycan synthesis</keyword>
<keyword id="KW-1185">Reference proteome</keyword>
<keyword id="KW-0808">Transferase</keyword>